<protein>
    <recommendedName>
        <fullName evidence="1">Bis(5'-nucleosyl)-tetraphosphatase, symmetrical</fullName>
        <ecNumber evidence="1">3.6.1.41</ecNumber>
    </recommendedName>
    <alternativeName>
        <fullName evidence="1">Ap4A hydrolase</fullName>
    </alternativeName>
    <alternativeName>
        <fullName evidence="1">Diadenosine 5',5'''-P1,P4-tetraphosphate pyrophosphohydrolase</fullName>
    </alternativeName>
    <alternativeName>
        <fullName evidence="1">Diadenosine tetraphosphatase</fullName>
    </alternativeName>
</protein>
<comment type="function">
    <text evidence="1">Hydrolyzes diadenosine 5',5'''-P1,P4-tetraphosphate to yield ADP.</text>
</comment>
<comment type="catalytic activity">
    <reaction evidence="1">
        <text>P(1),P(4)-bis(5'-adenosyl) tetraphosphate + H2O = 2 ADP + 2 H(+)</text>
        <dbReference type="Rhea" id="RHEA:24252"/>
        <dbReference type="ChEBI" id="CHEBI:15377"/>
        <dbReference type="ChEBI" id="CHEBI:15378"/>
        <dbReference type="ChEBI" id="CHEBI:58141"/>
        <dbReference type="ChEBI" id="CHEBI:456216"/>
        <dbReference type="EC" id="3.6.1.41"/>
    </reaction>
</comment>
<comment type="similarity">
    <text evidence="1">Belongs to the Ap4A hydrolase family.</text>
</comment>
<organism>
    <name type="scientific">Colwellia psychrerythraea (strain 34H / ATCC BAA-681)</name>
    <name type="common">Vibrio psychroerythus</name>
    <dbReference type="NCBI Taxonomy" id="167879"/>
    <lineage>
        <taxon>Bacteria</taxon>
        <taxon>Pseudomonadati</taxon>
        <taxon>Pseudomonadota</taxon>
        <taxon>Gammaproteobacteria</taxon>
        <taxon>Alteromonadales</taxon>
        <taxon>Colwelliaceae</taxon>
        <taxon>Colwellia</taxon>
    </lineage>
</organism>
<dbReference type="EC" id="3.6.1.41" evidence="1"/>
<dbReference type="EMBL" id="CP000083">
    <property type="protein sequence ID" value="AAZ27360.1"/>
    <property type="molecule type" value="Genomic_DNA"/>
</dbReference>
<dbReference type="RefSeq" id="WP_011045256.1">
    <property type="nucleotide sequence ID" value="NC_003910.7"/>
</dbReference>
<dbReference type="SMR" id="Q47VJ7"/>
<dbReference type="STRING" id="167879.CPS_4527"/>
<dbReference type="KEGG" id="cps:CPS_4527"/>
<dbReference type="HOGENOM" id="CLU_056184_2_0_6"/>
<dbReference type="Proteomes" id="UP000000547">
    <property type="component" value="Chromosome"/>
</dbReference>
<dbReference type="GO" id="GO:0008803">
    <property type="term" value="F:bis(5'-nucleosyl)-tetraphosphatase (symmetrical) activity"/>
    <property type="evidence" value="ECO:0007669"/>
    <property type="project" value="UniProtKB-UniRule"/>
</dbReference>
<dbReference type="CDD" id="cd07422">
    <property type="entry name" value="MPP_ApaH"/>
    <property type="match status" value="1"/>
</dbReference>
<dbReference type="Gene3D" id="3.60.21.10">
    <property type="match status" value="1"/>
</dbReference>
<dbReference type="HAMAP" id="MF_00199">
    <property type="entry name" value="ApaH"/>
    <property type="match status" value="1"/>
</dbReference>
<dbReference type="InterPro" id="IPR004617">
    <property type="entry name" value="ApaH"/>
</dbReference>
<dbReference type="InterPro" id="IPR004843">
    <property type="entry name" value="Calcineurin-like_PHP_ApaH"/>
</dbReference>
<dbReference type="InterPro" id="IPR029052">
    <property type="entry name" value="Metallo-depent_PP-like"/>
</dbReference>
<dbReference type="NCBIfam" id="TIGR00668">
    <property type="entry name" value="apaH"/>
    <property type="match status" value="1"/>
</dbReference>
<dbReference type="NCBIfam" id="NF001204">
    <property type="entry name" value="PRK00166.1"/>
    <property type="match status" value="1"/>
</dbReference>
<dbReference type="PANTHER" id="PTHR40942">
    <property type="match status" value="1"/>
</dbReference>
<dbReference type="PANTHER" id="PTHR40942:SF4">
    <property type="entry name" value="CYTOCHROME C5"/>
    <property type="match status" value="1"/>
</dbReference>
<dbReference type="Pfam" id="PF00149">
    <property type="entry name" value="Metallophos"/>
    <property type="match status" value="1"/>
</dbReference>
<dbReference type="PIRSF" id="PIRSF000903">
    <property type="entry name" value="B5n-ttraPtase_sm"/>
    <property type="match status" value="1"/>
</dbReference>
<dbReference type="SUPFAM" id="SSF56300">
    <property type="entry name" value="Metallo-dependent phosphatases"/>
    <property type="match status" value="1"/>
</dbReference>
<gene>
    <name evidence="1" type="primary">apaH</name>
    <name type="ordered locus">CPS_4527</name>
</gene>
<evidence type="ECO:0000255" key="1">
    <source>
        <dbReference type="HAMAP-Rule" id="MF_00199"/>
    </source>
</evidence>
<reference key="1">
    <citation type="journal article" date="2005" name="Proc. Natl. Acad. Sci. U.S.A.">
        <title>The psychrophilic lifestyle as revealed by the genome sequence of Colwellia psychrerythraea 34H through genomic and proteomic analyses.</title>
        <authorList>
            <person name="Methe B.A."/>
            <person name="Nelson K.E."/>
            <person name="Deming J.W."/>
            <person name="Momen B."/>
            <person name="Melamud E."/>
            <person name="Zhang X."/>
            <person name="Moult J."/>
            <person name="Madupu R."/>
            <person name="Nelson W.C."/>
            <person name="Dodson R.J."/>
            <person name="Brinkac L.M."/>
            <person name="Daugherty S.C."/>
            <person name="Durkin A.S."/>
            <person name="DeBoy R.T."/>
            <person name="Kolonay J.F."/>
            <person name="Sullivan S.A."/>
            <person name="Zhou L."/>
            <person name="Davidsen T.M."/>
            <person name="Wu M."/>
            <person name="Huston A.L."/>
            <person name="Lewis M."/>
            <person name="Weaver B."/>
            <person name="Weidman J.F."/>
            <person name="Khouri H."/>
            <person name="Utterback T.R."/>
            <person name="Feldblyum T.V."/>
            <person name="Fraser C.M."/>
        </authorList>
    </citation>
    <scope>NUCLEOTIDE SEQUENCE [LARGE SCALE GENOMIC DNA]</scope>
    <source>
        <strain>34H / ATCC BAA-681</strain>
    </source>
</reference>
<name>APAH_COLP3</name>
<proteinExistence type="inferred from homology"/>
<keyword id="KW-0378">Hydrolase</keyword>
<sequence length="285" mass="32144">MAIYLVGDIQGCFNELSSLLLQVNFDRNNDVLYLAGDLVARGPNSLETLRFVKSLGESAKVVLGNHDLHLLSVHAGIKKAKKSDNLSALLAAPDVNELMDWLAAQPLLQEIPNTCSNSNAINQANNNSAYMSHAGISPQWQLSVALEQAKFIQTKLASSDRNTWLALMYGEKPNDWHQAITEIERFRYSINAFTRMRFCFTDGTLEFEQKDSPENITLTNIVPWYELSQTINNTSWVFGHWASLMGKSSHPNIYPLDTGCVWGNQLTMLRWHDKKYFIQSSELSD</sequence>
<feature type="chain" id="PRO_1000012055" description="Bis(5'-nucleosyl)-tetraphosphatase, symmetrical">
    <location>
        <begin position="1"/>
        <end position="285"/>
    </location>
</feature>
<accession>Q47VJ7</accession>